<name>CPS_ACET2</name>
<gene>
    <name type="ordered locus">Cthe_0039</name>
</gene>
<comment type="function">
    <text>May bind attractants or detect changes in the extracellular concentration of soluble sugars.</text>
</comment>
<comment type="subcellular location">
    <subcellularLocation>
        <location evidence="6">Cell membrane</location>
        <topology evidence="6">Single-pass membrane protein</topology>
    </subcellularLocation>
</comment>
<comment type="similarity">
    <text evidence="6">Belongs to the methyl-accepting chemotaxis (MCP) protein family.</text>
</comment>
<comment type="sequence caution" evidence="6">
    <conflict type="erroneous initiation">
        <sequence resource="EMBL-CDS" id="ABN51280"/>
    </conflict>
</comment>
<sequence>MRYNTAKLLVYDAEQVSKGIEKIQEHVENTEKYLSLYESTVINETDRIQLQELKALWEKYKSLVDKEVELVKSGKTEEARQLLLSDIDDIGDTLRDYFEAFVEYNTTAAKEKVDENKQVASTASTVMIVVIFVGILIAIALGVFISRIISKPIGQMVEAADRLALGDVEVDVKAETRDEIGKLAESFKRMIENIREQAYVVERIAAGDMTVDVRVKSDKDLLGKKLKEMVDTNNEVLSNINEVAAQVAAGAKQVSDSSMQLSQGATEQASSIEELTASLEQVANQTQLSAKNANQANELAEVAKNNAEQGNKQMAEMLNAMEEINNSSSNISRIIKVIDEIAFQTNILALNAAVEAARAGQHGKGFAVVAEEVRNLAARSANAAKETTELIEGTIKRTENGTKIARETAEALNKIVEGISKAATLVNDIAVASNEQAAAITQINQGIAQVSQVVQTNSATSEESAAASEELSSQAELLKRSIAKFKLKNMGKMTSNRYKEVSPEIMRMLEDYTENKQPKSYSKEENGEYSDGKETAEKDVGGLKQKILLSDSEFGKY</sequence>
<keyword id="KW-1003">Cell membrane</keyword>
<keyword id="KW-0145">Chemotaxis</keyword>
<keyword id="KW-0472">Membrane</keyword>
<keyword id="KW-0488">Methylation</keyword>
<keyword id="KW-1185">Reference proteome</keyword>
<keyword id="KW-0807">Transducer</keyword>
<keyword id="KW-0812">Transmembrane</keyword>
<keyword id="KW-1133">Transmembrane helix</keyword>
<proteinExistence type="inferred from homology"/>
<evidence type="ECO:0000250" key="1"/>
<evidence type="ECO:0000255" key="2"/>
<evidence type="ECO:0000255" key="3">
    <source>
        <dbReference type="PROSITE-ProRule" id="PRU00102"/>
    </source>
</evidence>
<evidence type="ECO:0000255" key="4">
    <source>
        <dbReference type="PROSITE-ProRule" id="PRU00284"/>
    </source>
</evidence>
<evidence type="ECO:0000256" key="5">
    <source>
        <dbReference type="SAM" id="MobiDB-lite"/>
    </source>
</evidence>
<evidence type="ECO:0000305" key="6"/>
<feature type="chain" id="PRO_0000110547" description="Putative sensory transducer protein">
    <location>
        <begin position="1"/>
        <end position="557"/>
    </location>
</feature>
<feature type="transmembrane region" description="Helical" evidence="2">
    <location>
        <begin position="122"/>
        <end position="145"/>
    </location>
</feature>
<feature type="domain" description="HAMP" evidence="3">
    <location>
        <begin position="147"/>
        <end position="199"/>
    </location>
</feature>
<feature type="domain" description="Methyl-accepting transducer" evidence="4">
    <location>
        <begin position="243"/>
        <end position="472"/>
    </location>
</feature>
<feature type="region of interest" description="Disordered" evidence="5">
    <location>
        <begin position="511"/>
        <end position="542"/>
    </location>
</feature>
<feature type="compositionally biased region" description="Basic and acidic residues" evidence="5">
    <location>
        <begin position="511"/>
        <end position="541"/>
    </location>
</feature>
<feature type="modified residue" description="Glutamate methyl ester (Gln)" evidence="1">
    <location>
        <position position="268"/>
    </location>
</feature>
<feature type="modified residue" description="Glutamate methyl ester (Glu)" evidence="1">
    <location>
        <position position="274"/>
    </location>
</feature>
<feature type="modified residue" description="Glutamate methyl ester (Gln)" evidence="1">
    <location>
        <position position="281"/>
    </location>
</feature>
<feature type="modified residue" description="Glutamate methyl ester (Glu)" evidence="1">
    <location>
        <position position="463"/>
    </location>
</feature>
<organism>
    <name type="scientific">Acetivibrio thermocellus (strain ATCC 27405 / DSM 1237 / JCM 9322 / NBRC 103400 / NCIMB 10682 / NRRL B-4536 / VPI 7372)</name>
    <name type="common">Clostridium thermocellum</name>
    <dbReference type="NCBI Taxonomy" id="203119"/>
    <lineage>
        <taxon>Bacteria</taxon>
        <taxon>Bacillati</taxon>
        <taxon>Bacillota</taxon>
        <taxon>Clostridia</taxon>
        <taxon>Eubacteriales</taxon>
        <taxon>Oscillospiraceae</taxon>
        <taxon>Acetivibrio</taxon>
    </lineage>
</organism>
<dbReference type="EMBL" id="L04736">
    <property type="protein sequence ID" value="AAA20891.1"/>
    <property type="molecule type" value="Genomic_DNA"/>
</dbReference>
<dbReference type="EMBL" id="CP000568">
    <property type="protein sequence ID" value="ABN51280.1"/>
    <property type="status" value="ALT_INIT"/>
    <property type="molecule type" value="Genomic_DNA"/>
</dbReference>
<dbReference type="PIR" id="B47704">
    <property type="entry name" value="B47704"/>
</dbReference>
<dbReference type="RefSeq" id="WP_011837739.1">
    <property type="nucleotide sequence ID" value="NC_009012.1"/>
</dbReference>
<dbReference type="SMR" id="Q02929"/>
<dbReference type="STRING" id="203119.Cthe_0039"/>
<dbReference type="GeneID" id="35804444"/>
<dbReference type="KEGG" id="cth:Cthe_0039"/>
<dbReference type="eggNOG" id="COG0840">
    <property type="taxonomic scope" value="Bacteria"/>
</dbReference>
<dbReference type="HOGENOM" id="CLU_000445_107_16_9"/>
<dbReference type="OrthoDB" id="1862723at2"/>
<dbReference type="Proteomes" id="UP000002145">
    <property type="component" value="Chromosome"/>
</dbReference>
<dbReference type="GO" id="GO:0005886">
    <property type="term" value="C:plasma membrane"/>
    <property type="evidence" value="ECO:0007669"/>
    <property type="project" value="UniProtKB-SubCell"/>
</dbReference>
<dbReference type="GO" id="GO:0004888">
    <property type="term" value="F:transmembrane signaling receptor activity"/>
    <property type="evidence" value="ECO:0007669"/>
    <property type="project" value="InterPro"/>
</dbReference>
<dbReference type="GO" id="GO:0006935">
    <property type="term" value="P:chemotaxis"/>
    <property type="evidence" value="ECO:0007669"/>
    <property type="project" value="UniProtKB-KW"/>
</dbReference>
<dbReference type="GO" id="GO:0007165">
    <property type="term" value="P:signal transduction"/>
    <property type="evidence" value="ECO:0007669"/>
    <property type="project" value="UniProtKB-KW"/>
</dbReference>
<dbReference type="CDD" id="cd06225">
    <property type="entry name" value="HAMP"/>
    <property type="match status" value="1"/>
</dbReference>
<dbReference type="CDD" id="cd11386">
    <property type="entry name" value="MCP_signal"/>
    <property type="match status" value="1"/>
</dbReference>
<dbReference type="FunFam" id="1.10.287.950:FF:000001">
    <property type="entry name" value="Methyl-accepting chemotaxis sensory transducer"/>
    <property type="match status" value="1"/>
</dbReference>
<dbReference type="Gene3D" id="6.10.340.10">
    <property type="match status" value="1"/>
</dbReference>
<dbReference type="Gene3D" id="1.10.287.950">
    <property type="entry name" value="Methyl-accepting chemotaxis protein"/>
    <property type="match status" value="1"/>
</dbReference>
<dbReference type="InterPro" id="IPR004090">
    <property type="entry name" value="Chemotax_Me-accpt_rcpt"/>
</dbReference>
<dbReference type="InterPro" id="IPR003660">
    <property type="entry name" value="HAMP_dom"/>
</dbReference>
<dbReference type="InterPro" id="IPR024478">
    <property type="entry name" value="HlyB_4HB_MCP"/>
</dbReference>
<dbReference type="InterPro" id="IPR051310">
    <property type="entry name" value="MCP_chemotaxis"/>
</dbReference>
<dbReference type="InterPro" id="IPR004089">
    <property type="entry name" value="MCPsignal_dom"/>
</dbReference>
<dbReference type="PANTHER" id="PTHR43531:SF11">
    <property type="entry name" value="METHYL-ACCEPTING CHEMOTAXIS PROTEIN 3"/>
    <property type="match status" value="1"/>
</dbReference>
<dbReference type="PANTHER" id="PTHR43531">
    <property type="entry name" value="PROTEIN ICFG"/>
    <property type="match status" value="1"/>
</dbReference>
<dbReference type="Pfam" id="PF12729">
    <property type="entry name" value="4HB_MCP_1"/>
    <property type="match status" value="1"/>
</dbReference>
<dbReference type="Pfam" id="PF00672">
    <property type="entry name" value="HAMP"/>
    <property type="match status" value="1"/>
</dbReference>
<dbReference type="Pfam" id="PF00015">
    <property type="entry name" value="MCPsignal"/>
    <property type="match status" value="1"/>
</dbReference>
<dbReference type="PRINTS" id="PR00260">
    <property type="entry name" value="CHEMTRNSDUCR"/>
</dbReference>
<dbReference type="SMART" id="SM00304">
    <property type="entry name" value="HAMP"/>
    <property type="match status" value="1"/>
</dbReference>
<dbReference type="SMART" id="SM00283">
    <property type="entry name" value="MA"/>
    <property type="match status" value="1"/>
</dbReference>
<dbReference type="SUPFAM" id="SSF58104">
    <property type="entry name" value="Methyl-accepting chemotaxis protein (MCP) signaling domain"/>
    <property type="match status" value="1"/>
</dbReference>
<dbReference type="PROSITE" id="PS50111">
    <property type="entry name" value="CHEMOTAXIS_TRANSDUC_2"/>
    <property type="match status" value="1"/>
</dbReference>
<dbReference type="PROSITE" id="PS50885">
    <property type="entry name" value="HAMP"/>
    <property type="match status" value="1"/>
</dbReference>
<protein>
    <recommendedName>
        <fullName>Putative sensory transducer protein</fullName>
    </recommendedName>
</protein>
<accession>Q02929</accession>
<accession>A3DBF1</accession>
<reference key="1">
    <citation type="journal article" date="1993" name="J. Gen. Microbiol.">
        <title>Gene sequence and properties of CelI, a family E endoglucanase from Clostridium thermocellum.</title>
        <authorList>
            <person name="Hazlewood G.P."/>
            <person name="Davidson K."/>
            <person name="Laurie J.I."/>
            <person name="Huskisson N.S."/>
            <person name="Gilbert H.J."/>
        </authorList>
    </citation>
    <scope>NUCLEOTIDE SEQUENCE [GENOMIC DNA]</scope>
</reference>
<reference key="2">
    <citation type="submission" date="2007-02" db="EMBL/GenBank/DDBJ databases">
        <title>Complete sequence of Clostridium thermocellum ATCC 27405.</title>
        <authorList>
            <consortium name="US DOE Joint Genome Institute"/>
            <person name="Copeland A."/>
            <person name="Lucas S."/>
            <person name="Lapidus A."/>
            <person name="Barry K."/>
            <person name="Detter J.C."/>
            <person name="Glavina del Rio T."/>
            <person name="Hammon N."/>
            <person name="Israni S."/>
            <person name="Dalin E."/>
            <person name="Tice H."/>
            <person name="Pitluck S."/>
            <person name="Chertkov O."/>
            <person name="Brettin T."/>
            <person name="Bruce D."/>
            <person name="Han C."/>
            <person name="Tapia R."/>
            <person name="Gilna P."/>
            <person name="Schmutz J."/>
            <person name="Larimer F."/>
            <person name="Land M."/>
            <person name="Hauser L."/>
            <person name="Kyrpides N."/>
            <person name="Mikhailova N."/>
            <person name="Wu J.H.D."/>
            <person name="Newcomb M."/>
            <person name="Richardson P."/>
        </authorList>
    </citation>
    <scope>NUCLEOTIDE SEQUENCE [LARGE SCALE GENOMIC DNA]</scope>
    <source>
        <strain>ATCC 27405 / DSM 1237 / JCM 9322 / NBRC 103400 / NCIMB 10682 / NRRL B-4536 / VPI 7372</strain>
    </source>
</reference>